<dbReference type="EC" id="2.1.1.185" evidence="1"/>
<dbReference type="EMBL" id="BX640421">
    <property type="protein sequence ID" value="CAE43786.1"/>
    <property type="molecule type" value="Genomic_DNA"/>
</dbReference>
<dbReference type="RefSeq" id="NP_882042.1">
    <property type="nucleotide sequence ID" value="NC_002929.2"/>
</dbReference>
<dbReference type="RefSeq" id="WP_003812973.1">
    <property type="nucleotide sequence ID" value="NZ_CP039022.1"/>
</dbReference>
<dbReference type="SMR" id="Q7VTK4"/>
<dbReference type="STRING" id="257313.BP3527"/>
<dbReference type="PaxDb" id="257313-BP3527"/>
<dbReference type="GeneID" id="93204317"/>
<dbReference type="KEGG" id="bpe:BP3527"/>
<dbReference type="PATRIC" id="fig|257313.5.peg.3819"/>
<dbReference type="eggNOG" id="COG0566">
    <property type="taxonomic scope" value="Bacteria"/>
</dbReference>
<dbReference type="HOGENOM" id="CLU_021322_0_1_4"/>
<dbReference type="Proteomes" id="UP000002676">
    <property type="component" value="Chromosome"/>
</dbReference>
<dbReference type="GO" id="GO:0005829">
    <property type="term" value="C:cytosol"/>
    <property type="evidence" value="ECO:0007669"/>
    <property type="project" value="TreeGrafter"/>
</dbReference>
<dbReference type="GO" id="GO:0003723">
    <property type="term" value="F:RNA binding"/>
    <property type="evidence" value="ECO:0007669"/>
    <property type="project" value="InterPro"/>
</dbReference>
<dbReference type="GO" id="GO:0070039">
    <property type="term" value="F:rRNA (guanosine-2'-O-)-methyltransferase activity"/>
    <property type="evidence" value="ECO:0007669"/>
    <property type="project" value="UniProtKB-UniRule"/>
</dbReference>
<dbReference type="CDD" id="cd18103">
    <property type="entry name" value="SpoU-like_RlmB"/>
    <property type="match status" value="1"/>
</dbReference>
<dbReference type="FunFam" id="3.40.1280.10:FF:000008">
    <property type="entry name" value="Group 3 RNA methyltransferase TrmH"/>
    <property type="match status" value="1"/>
</dbReference>
<dbReference type="Gene3D" id="3.30.1330.30">
    <property type="match status" value="1"/>
</dbReference>
<dbReference type="Gene3D" id="3.40.1280.10">
    <property type="match status" value="1"/>
</dbReference>
<dbReference type="HAMAP" id="MF_01887">
    <property type="entry name" value="23SrRNA_methyltr_B"/>
    <property type="match status" value="1"/>
</dbReference>
<dbReference type="InterPro" id="IPR024915">
    <property type="entry name" value="23S_rRNA_MeTrfase_RlmB"/>
</dbReference>
<dbReference type="InterPro" id="IPR029028">
    <property type="entry name" value="Alpha/beta_knot_MTases"/>
</dbReference>
<dbReference type="InterPro" id="IPR029064">
    <property type="entry name" value="Ribosomal_eL30-like_sf"/>
</dbReference>
<dbReference type="InterPro" id="IPR004441">
    <property type="entry name" value="rRNA_MeTrfase_TrmH"/>
</dbReference>
<dbReference type="InterPro" id="IPR001537">
    <property type="entry name" value="SpoU_MeTrfase"/>
</dbReference>
<dbReference type="InterPro" id="IPR013123">
    <property type="entry name" value="SpoU_subst-bd"/>
</dbReference>
<dbReference type="InterPro" id="IPR029026">
    <property type="entry name" value="tRNA_m1G_MTases_N"/>
</dbReference>
<dbReference type="NCBIfam" id="TIGR00186">
    <property type="entry name" value="rRNA_methyl_3"/>
    <property type="match status" value="1"/>
</dbReference>
<dbReference type="PANTHER" id="PTHR46429">
    <property type="entry name" value="23S RRNA (GUANOSINE-2'-O-)-METHYLTRANSFERASE RLMB"/>
    <property type="match status" value="1"/>
</dbReference>
<dbReference type="PANTHER" id="PTHR46429:SF1">
    <property type="entry name" value="23S RRNA (GUANOSINE-2'-O-)-METHYLTRANSFERASE RLMB"/>
    <property type="match status" value="1"/>
</dbReference>
<dbReference type="Pfam" id="PF00588">
    <property type="entry name" value="SpoU_methylase"/>
    <property type="match status" value="1"/>
</dbReference>
<dbReference type="Pfam" id="PF08032">
    <property type="entry name" value="SpoU_sub_bind"/>
    <property type="match status" value="1"/>
</dbReference>
<dbReference type="SMART" id="SM00967">
    <property type="entry name" value="SpoU_sub_bind"/>
    <property type="match status" value="1"/>
</dbReference>
<dbReference type="SUPFAM" id="SSF75217">
    <property type="entry name" value="alpha/beta knot"/>
    <property type="match status" value="1"/>
</dbReference>
<dbReference type="SUPFAM" id="SSF55315">
    <property type="entry name" value="L30e-like"/>
    <property type="match status" value="1"/>
</dbReference>
<organism>
    <name type="scientific">Bordetella pertussis (strain Tohama I / ATCC BAA-589 / NCTC 13251)</name>
    <dbReference type="NCBI Taxonomy" id="257313"/>
    <lineage>
        <taxon>Bacteria</taxon>
        <taxon>Pseudomonadati</taxon>
        <taxon>Pseudomonadota</taxon>
        <taxon>Betaproteobacteria</taxon>
        <taxon>Burkholderiales</taxon>
        <taxon>Alcaligenaceae</taxon>
        <taxon>Bordetella</taxon>
    </lineage>
</organism>
<proteinExistence type="inferred from homology"/>
<feature type="chain" id="PRO_0000159780" description="23S rRNA (guanosine-2'-O-)-methyltransferase RlmB">
    <location>
        <begin position="1"/>
        <end position="245"/>
    </location>
</feature>
<feature type="binding site" evidence="1">
    <location>
        <position position="197"/>
    </location>
    <ligand>
        <name>S-adenosyl-L-methionine</name>
        <dbReference type="ChEBI" id="CHEBI:59789"/>
    </ligand>
</feature>
<feature type="binding site" evidence="1">
    <location>
        <position position="217"/>
    </location>
    <ligand>
        <name>S-adenosyl-L-methionine</name>
        <dbReference type="ChEBI" id="CHEBI:59789"/>
    </ligand>
</feature>
<feature type="binding site" evidence="1">
    <location>
        <position position="226"/>
    </location>
    <ligand>
        <name>S-adenosyl-L-methionine</name>
        <dbReference type="ChEBI" id="CHEBI:59789"/>
    </ligand>
</feature>
<gene>
    <name evidence="1" type="primary">rlmB</name>
    <name type="ordered locus">BP3527</name>
</gene>
<keyword id="KW-0963">Cytoplasm</keyword>
<keyword id="KW-0489">Methyltransferase</keyword>
<keyword id="KW-1185">Reference proteome</keyword>
<keyword id="KW-0698">rRNA processing</keyword>
<keyword id="KW-0949">S-adenosyl-L-methionine</keyword>
<keyword id="KW-0808">Transferase</keyword>
<accession>Q7VTK4</accession>
<comment type="function">
    <text evidence="1">Specifically methylates the ribose of guanosine 2251 in 23S rRNA.</text>
</comment>
<comment type="catalytic activity">
    <reaction evidence="1">
        <text>guanosine(2251) in 23S rRNA + S-adenosyl-L-methionine = 2'-O-methylguanosine(2251) in 23S rRNA + S-adenosyl-L-homocysteine + H(+)</text>
        <dbReference type="Rhea" id="RHEA:24140"/>
        <dbReference type="Rhea" id="RHEA-COMP:10239"/>
        <dbReference type="Rhea" id="RHEA-COMP:10241"/>
        <dbReference type="ChEBI" id="CHEBI:15378"/>
        <dbReference type="ChEBI" id="CHEBI:57856"/>
        <dbReference type="ChEBI" id="CHEBI:59789"/>
        <dbReference type="ChEBI" id="CHEBI:74269"/>
        <dbReference type="ChEBI" id="CHEBI:74445"/>
        <dbReference type="EC" id="2.1.1.185"/>
    </reaction>
</comment>
<comment type="subcellular location">
    <subcellularLocation>
        <location evidence="1">Cytoplasm</location>
    </subcellularLocation>
</comment>
<comment type="similarity">
    <text evidence="1">Belongs to the class IV-like SAM-binding methyltransferase superfamily. RNA methyltransferase TrmH family. RlmB subfamily.</text>
</comment>
<evidence type="ECO:0000255" key="1">
    <source>
        <dbReference type="HAMAP-Rule" id="MF_01887"/>
    </source>
</evidence>
<name>RLMB_BORPE</name>
<sequence length="245" mass="26621">MASTQVLAGFHAVVARLRHAPESIKEIYVEASRRDKRMQTFLEQAERAGRRVHPVAAERLDGLARGTRHQGVVAVAEERSLAVGIDEVLDVIEGPALLLILDGVTDPHNLGACLRTADAAGVHAVIAPRDRAVGLNATVQRVACGAADTVPYLTVTNLARTMRELKERDVWLVGTDDQAGESMHQVDARRSMAWVMGAEGEGMRRLTRETCDQLVRIPMLGSVESLNVSVASAVCLYESVRQRQG</sequence>
<reference key="1">
    <citation type="journal article" date="2003" name="Nat. Genet.">
        <title>Comparative analysis of the genome sequences of Bordetella pertussis, Bordetella parapertussis and Bordetella bronchiseptica.</title>
        <authorList>
            <person name="Parkhill J."/>
            <person name="Sebaihia M."/>
            <person name="Preston A."/>
            <person name="Murphy L.D."/>
            <person name="Thomson N.R."/>
            <person name="Harris D.E."/>
            <person name="Holden M.T.G."/>
            <person name="Churcher C.M."/>
            <person name="Bentley S.D."/>
            <person name="Mungall K.L."/>
            <person name="Cerdeno-Tarraga A.-M."/>
            <person name="Temple L."/>
            <person name="James K.D."/>
            <person name="Harris B."/>
            <person name="Quail M.A."/>
            <person name="Achtman M."/>
            <person name="Atkin R."/>
            <person name="Baker S."/>
            <person name="Basham D."/>
            <person name="Bason N."/>
            <person name="Cherevach I."/>
            <person name="Chillingworth T."/>
            <person name="Collins M."/>
            <person name="Cronin A."/>
            <person name="Davis P."/>
            <person name="Doggett J."/>
            <person name="Feltwell T."/>
            <person name="Goble A."/>
            <person name="Hamlin N."/>
            <person name="Hauser H."/>
            <person name="Holroyd S."/>
            <person name="Jagels K."/>
            <person name="Leather S."/>
            <person name="Moule S."/>
            <person name="Norberczak H."/>
            <person name="O'Neil S."/>
            <person name="Ormond D."/>
            <person name="Price C."/>
            <person name="Rabbinowitsch E."/>
            <person name="Rutter S."/>
            <person name="Sanders M."/>
            <person name="Saunders D."/>
            <person name="Seeger K."/>
            <person name="Sharp S."/>
            <person name="Simmonds M."/>
            <person name="Skelton J."/>
            <person name="Squares R."/>
            <person name="Squares S."/>
            <person name="Stevens K."/>
            <person name="Unwin L."/>
            <person name="Whitehead S."/>
            <person name="Barrell B.G."/>
            <person name="Maskell D.J."/>
        </authorList>
    </citation>
    <scope>NUCLEOTIDE SEQUENCE [LARGE SCALE GENOMIC DNA]</scope>
    <source>
        <strain>Tohama I / ATCC BAA-589 / NCTC 13251</strain>
    </source>
</reference>
<protein>
    <recommendedName>
        <fullName evidence="1">23S rRNA (guanosine-2'-O-)-methyltransferase RlmB</fullName>
        <ecNumber evidence="1">2.1.1.185</ecNumber>
    </recommendedName>
    <alternativeName>
        <fullName evidence="1">23S rRNA (guanosine2251 2'-O)-methyltransferase</fullName>
    </alternativeName>
    <alternativeName>
        <fullName evidence="1">23S rRNA Gm2251 2'-O-methyltransferase</fullName>
    </alternativeName>
</protein>